<reference key="1">
    <citation type="journal article" date="2008" name="J. Bacteriol.">
        <title>Complete genome sequence of Leuconostoc citreum KM20.</title>
        <authorList>
            <person name="Kim J.F."/>
            <person name="Jeong H."/>
            <person name="Lee J.-S."/>
            <person name="Choi S.-H."/>
            <person name="Ha M."/>
            <person name="Hur C.-G."/>
            <person name="Kim J.-S."/>
            <person name="Lee S."/>
            <person name="Park H.-S."/>
            <person name="Park Y.-H."/>
            <person name="Oh T.K."/>
        </authorList>
    </citation>
    <scope>NUCLEOTIDE SEQUENCE [LARGE SCALE GENOMIC DNA]</scope>
    <source>
        <strain>KM20</strain>
    </source>
</reference>
<proteinExistence type="inferred from homology"/>
<name>Y994_LEUCK</name>
<feature type="chain" id="PRO_1000121046" description="UPF0154 protein LCK_00994">
    <location>
        <begin position="1"/>
        <end position="77"/>
    </location>
</feature>
<feature type="transmembrane region" description="Helical" evidence="1">
    <location>
        <begin position="5"/>
        <end position="25"/>
    </location>
</feature>
<feature type="region of interest" description="Disordered" evidence="2">
    <location>
        <begin position="50"/>
        <end position="77"/>
    </location>
</feature>
<accession>B1MZ69</accession>
<keyword id="KW-1003">Cell membrane</keyword>
<keyword id="KW-0472">Membrane</keyword>
<keyword id="KW-1185">Reference proteome</keyword>
<keyword id="KW-0812">Transmembrane</keyword>
<keyword id="KW-1133">Transmembrane helix</keyword>
<organism>
    <name type="scientific">Leuconostoc citreum (strain KM20)</name>
    <dbReference type="NCBI Taxonomy" id="349519"/>
    <lineage>
        <taxon>Bacteria</taxon>
        <taxon>Bacillati</taxon>
        <taxon>Bacillota</taxon>
        <taxon>Bacilli</taxon>
        <taxon>Lactobacillales</taxon>
        <taxon>Lactobacillaceae</taxon>
        <taxon>Leuconostoc</taxon>
    </lineage>
</organism>
<protein>
    <recommendedName>
        <fullName evidence="1">UPF0154 protein LCK_00994</fullName>
    </recommendedName>
</protein>
<dbReference type="EMBL" id="DQ489736">
    <property type="protein sequence ID" value="ACA82821.1"/>
    <property type="molecule type" value="Genomic_DNA"/>
</dbReference>
<dbReference type="RefSeq" id="WP_004900720.1">
    <property type="nucleotide sequence ID" value="NC_010471.1"/>
</dbReference>
<dbReference type="SMR" id="B1MZ69"/>
<dbReference type="STRING" id="349519.LCK_00994"/>
<dbReference type="KEGG" id="lci:LCK_00994"/>
<dbReference type="eggNOG" id="COG3763">
    <property type="taxonomic scope" value="Bacteria"/>
</dbReference>
<dbReference type="HOGENOM" id="CLU_180108_0_1_9"/>
<dbReference type="Proteomes" id="UP000002166">
    <property type="component" value="Chromosome"/>
</dbReference>
<dbReference type="GO" id="GO:0005886">
    <property type="term" value="C:plasma membrane"/>
    <property type="evidence" value="ECO:0007669"/>
    <property type="project" value="UniProtKB-SubCell"/>
</dbReference>
<dbReference type="HAMAP" id="MF_00363">
    <property type="entry name" value="UPF0154"/>
    <property type="match status" value="1"/>
</dbReference>
<dbReference type="InterPro" id="IPR005359">
    <property type="entry name" value="UPF0154"/>
</dbReference>
<dbReference type="Pfam" id="PF03672">
    <property type="entry name" value="UPF0154"/>
    <property type="match status" value="1"/>
</dbReference>
<comment type="subcellular location">
    <subcellularLocation>
        <location evidence="1">Cell membrane</location>
        <topology evidence="1">Single-pass membrane protein</topology>
    </subcellularLocation>
</comment>
<comment type="similarity">
    <text evidence="1">Belongs to the UPF0154 family.</text>
</comment>
<sequence>MNLGFGILIFVLGLVIGLVIGFFVARNSMKSYLAKNPPISEEMMKSMMMSMGQKPSQKKLNQMMAQMKQQSEQSQKK</sequence>
<gene>
    <name type="ordered locus">LCK_00994</name>
</gene>
<evidence type="ECO:0000255" key="1">
    <source>
        <dbReference type="HAMAP-Rule" id="MF_00363"/>
    </source>
</evidence>
<evidence type="ECO:0000256" key="2">
    <source>
        <dbReference type="SAM" id="MobiDB-lite"/>
    </source>
</evidence>